<sequence length="323" mass="38273">MDRRNPFQHHHHHHQLHHHLIQQQQLPPPPLSTTATMDPGGGGGGGERIPQWSIEETKELLAIREELDQTFMETKRNKLLWEVVAAKMADKGFVRSAEQCKSKWKNLVTRYKACETTEPDAIRQQFPFYNEIQSIFEARMQRMLWSEATEPSTSSKRKHHQFSSDDEEEEVDEPNQDINEELLSLVETQKRETEVITTSTSTNPRKRAKKGKGVASGTKAETAGNTLKDILEEFMRQTVKMEKEWRDAWEMKEIEREKREKEWRRRMAELEEERAATERRWMEREEERRLREEARAQKRDSLIDALLNRLNRDHNDDHHNQGF</sequence>
<gene>
    <name type="primary">GT-3A</name>
    <name type="synonym">GT3A</name>
    <name type="ordered locus">At5g01380</name>
    <name type="ORF">T10O8.90</name>
</gene>
<protein>
    <recommendedName>
        <fullName>Trihelix transcription factor GT-3a</fullName>
    </recommendedName>
    <alternativeName>
        <fullName>Trihelix DNA-binding protein GT-3a</fullName>
    </alternativeName>
</protein>
<organism>
    <name type="scientific">Arabidopsis thaliana</name>
    <name type="common">Mouse-ear cress</name>
    <dbReference type="NCBI Taxonomy" id="3702"/>
    <lineage>
        <taxon>Eukaryota</taxon>
        <taxon>Viridiplantae</taxon>
        <taxon>Streptophyta</taxon>
        <taxon>Embryophyta</taxon>
        <taxon>Tracheophyta</taxon>
        <taxon>Spermatophyta</taxon>
        <taxon>Magnoliopsida</taxon>
        <taxon>eudicotyledons</taxon>
        <taxon>Gunneridae</taxon>
        <taxon>Pentapetalae</taxon>
        <taxon>rosids</taxon>
        <taxon>malvids</taxon>
        <taxon>Brassicales</taxon>
        <taxon>Brassicaceae</taxon>
        <taxon>Camelineae</taxon>
        <taxon>Arabidopsis</taxon>
    </lineage>
</organism>
<keyword id="KW-0238">DNA-binding</keyword>
<keyword id="KW-0539">Nucleus</keyword>
<keyword id="KW-1185">Reference proteome</keyword>
<keyword id="KW-0804">Transcription</keyword>
<keyword id="KW-0805">Transcription regulation</keyword>
<proteinExistence type="evidence at protein level"/>
<reference key="1">
    <citation type="journal article" date="2004" name="FEBS Lett.">
        <title>Analysis of GT-3a identifies a distinct subgroup of trihelix DNA-binding transcription factors in Arabidopsis.</title>
        <authorList>
            <person name="Ayadi M."/>
            <person name="Delaporte V."/>
            <person name="Li Y.F."/>
            <person name="Zhou D.X."/>
        </authorList>
    </citation>
    <scope>NUCLEOTIDE SEQUENCE [GENOMIC DNA / MRNA]</scope>
    <scope>FUNCTION</scope>
    <scope>SUBUNIT</scope>
    <scope>SUBCELLULAR LOCATION</scope>
    <scope>TISSUE SPECIFICITY</scope>
    <scope>INTERACTION WITH GT-3B</scope>
    <source>
        <strain>cv. C24</strain>
        <strain>cv. Columbia</strain>
    </source>
</reference>
<reference key="2">
    <citation type="journal article" date="2000" name="Nature">
        <title>Sequence and analysis of chromosome 5 of the plant Arabidopsis thaliana.</title>
        <authorList>
            <person name="Tabata S."/>
            <person name="Kaneko T."/>
            <person name="Nakamura Y."/>
            <person name="Kotani H."/>
            <person name="Kato T."/>
            <person name="Asamizu E."/>
            <person name="Miyajima N."/>
            <person name="Sasamoto S."/>
            <person name="Kimura T."/>
            <person name="Hosouchi T."/>
            <person name="Kawashima K."/>
            <person name="Kohara M."/>
            <person name="Matsumoto M."/>
            <person name="Matsuno A."/>
            <person name="Muraki A."/>
            <person name="Nakayama S."/>
            <person name="Nakazaki N."/>
            <person name="Naruo K."/>
            <person name="Okumura S."/>
            <person name="Shinpo S."/>
            <person name="Takeuchi C."/>
            <person name="Wada T."/>
            <person name="Watanabe A."/>
            <person name="Yamada M."/>
            <person name="Yasuda M."/>
            <person name="Sato S."/>
            <person name="de la Bastide M."/>
            <person name="Huang E."/>
            <person name="Spiegel L."/>
            <person name="Gnoj L."/>
            <person name="O'Shaughnessy A."/>
            <person name="Preston R."/>
            <person name="Habermann K."/>
            <person name="Murray J."/>
            <person name="Johnson D."/>
            <person name="Rohlfing T."/>
            <person name="Nelson J."/>
            <person name="Stoneking T."/>
            <person name="Pepin K."/>
            <person name="Spieth J."/>
            <person name="Sekhon M."/>
            <person name="Armstrong J."/>
            <person name="Becker M."/>
            <person name="Belter E."/>
            <person name="Cordum H."/>
            <person name="Cordes M."/>
            <person name="Courtney L."/>
            <person name="Courtney W."/>
            <person name="Dante M."/>
            <person name="Du H."/>
            <person name="Edwards J."/>
            <person name="Fryman J."/>
            <person name="Haakensen B."/>
            <person name="Lamar E."/>
            <person name="Latreille P."/>
            <person name="Leonard S."/>
            <person name="Meyer R."/>
            <person name="Mulvaney E."/>
            <person name="Ozersky P."/>
            <person name="Riley A."/>
            <person name="Strowmatt C."/>
            <person name="Wagner-McPherson C."/>
            <person name="Wollam A."/>
            <person name="Yoakum M."/>
            <person name="Bell M."/>
            <person name="Dedhia N."/>
            <person name="Parnell L."/>
            <person name="Shah R."/>
            <person name="Rodriguez M."/>
            <person name="Hoon See L."/>
            <person name="Vil D."/>
            <person name="Baker J."/>
            <person name="Kirchoff K."/>
            <person name="Toth K."/>
            <person name="King L."/>
            <person name="Bahret A."/>
            <person name="Miller B."/>
            <person name="Marra M.A."/>
            <person name="Martienssen R."/>
            <person name="McCombie W.R."/>
            <person name="Wilson R.K."/>
            <person name="Murphy G."/>
            <person name="Bancroft I."/>
            <person name="Volckaert G."/>
            <person name="Wambutt R."/>
            <person name="Duesterhoeft A."/>
            <person name="Stiekema W."/>
            <person name="Pohl T."/>
            <person name="Entian K.-D."/>
            <person name="Terryn N."/>
            <person name="Hartley N."/>
            <person name="Bent E."/>
            <person name="Johnson S."/>
            <person name="Langham S.-A."/>
            <person name="McCullagh B."/>
            <person name="Robben J."/>
            <person name="Grymonprez B."/>
            <person name="Zimmermann W."/>
            <person name="Ramsperger U."/>
            <person name="Wedler H."/>
            <person name="Balke K."/>
            <person name="Wedler E."/>
            <person name="Peters S."/>
            <person name="van Staveren M."/>
            <person name="Dirkse W."/>
            <person name="Mooijman P."/>
            <person name="Klein Lankhorst R."/>
            <person name="Weitzenegger T."/>
            <person name="Bothe G."/>
            <person name="Rose M."/>
            <person name="Hauf J."/>
            <person name="Berneiser S."/>
            <person name="Hempel S."/>
            <person name="Feldpausch M."/>
            <person name="Lamberth S."/>
            <person name="Villarroel R."/>
            <person name="Gielen J."/>
            <person name="Ardiles W."/>
            <person name="Bents O."/>
            <person name="Lemcke K."/>
            <person name="Kolesov G."/>
            <person name="Mayer K.F.X."/>
            <person name="Rudd S."/>
            <person name="Schoof H."/>
            <person name="Schueller C."/>
            <person name="Zaccaria P."/>
            <person name="Mewes H.-W."/>
            <person name="Bevan M."/>
            <person name="Fransz P.F."/>
        </authorList>
    </citation>
    <scope>NUCLEOTIDE SEQUENCE [LARGE SCALE GENOMIC DNA]</scope>
    <source>
        <strain>cv. Columbia</strain>
    </source>
</reference>
<reference key="3">
    <citation type="journal article" date="2017" name="Plant J.">
        <title>Araport11: a complete reannotation of the Arabidopsis thaliana reference genome.</title>
        <authorList>
            <person name="Cheng C.Y."/>
            <person name="Krishnakumar V."/>
            <person name="Chan A.P."/>
            <person name="Thibaud-Nissen F."/>
            <person name="Schobel S."/>
            <person name="Town C.D."/>
        </authorList>
    </citation>
    <scope>GENOME REANNOTATION</scope>
    <source>
        <strain>cv. Columbia</strain>
    </source>
</reference>
<reference key="4">
    <citation type="submission" date="2006-09" db="EMBL/GenBank/DDBJ databases">
        <title>Arabidopsis ORF clones.</title>
        <authorList>
            <person name="Quinitio C."/>
            <person name="Chen H."/>
            <person name="Kim C.J."/>
            <person name="Shinn P."/>
            <person name="Ecker J.R."/>
        </authorList>
    </citation>
    <scope>NUCLEOTIDE SEQUENCE [LARGE SCALE MRNA]</scope>
    <source>
        <strain>cv. Columbia</strain>
    </source>
</reference>
<accession>Q9SDW0</accession>
<dbReference type="EMBL" id="AF206715">
    <property type="protein sequence ID" value="AAF17610.1"/>
    <property type="molecule type" value="Genomic_DNA"/>
</dbReference>
<dbReference type="EMBL" id="AY271677">
    <property type="protein sequence ID" value="AAP13347.1"/>
    <property type="molecule type" value="mRNA"/>
</dbReference>
<dbReference type="EMBL" id="AL161746">
    <property type="protein sequence ID" value="CAB81921.1"/>
    <property type="molecule type" value="Genomic_DNA"/>
</dbReference>
<dbReference type="EMBL" id="CP002688">
    <property type="protein sequence ID" value="AED90334.1"/>
    <property type="molecule type" value="Genomic_DNA"/>
</dbReference>
<dbReference type="EMBL" id="BT028926">
    <property type="protein sequence ID" value="ABI49473.1"/>
    <property type="molecule type" value="mRNA"/>
</dbReference>
<dbReference type="PIR" id="T48160">
    <property type="entry name" value="T48160"/>
</dbReference>
<dbReference type="RefSeq" id="NP_195758.1">
    <property type="nucleotide sequence ID" value="NM_120216.4"/>
</dbReference>
<dbReference type="SMR" id="Q9SDW0"/>
<dbReference type="BioGRID" id="17171">
    <property type="interactions" value="25"/>
</dbReference>
<dbReference type="FunCoup" id="Q9SDW0">
    <property type="interactions" value="27"/>
</dbReference>
<dbReference type="IntAct" id="Q9SDW0">
    <property type="interactions" value="25"/>
</dbReference>
<dbReference type="STRING" id="3702.Q9SDW0"/>
<dbReference type="iPTMnet" id="Q9SDW0"/>
<dbReference type="PaxDb" id="3702-AT5G01380.1"/>
<dbReference type="ProteomicsDB" id="234408"/>
<dbReference type="EnsemblPlants" id="AT5G01380.1">
    <property type="protein sequence ID" value="AT5G01380.1"/>
    <property type="gene ID" value="AT5G01380"/>
</dbReference>
<dbReference type="GeneID" id="831895"/>
<dbReference type="Gramene" id="AT5G01380.1">
    <property type="protein sequence ID" value="AT5G01380.1"/>
    <property type="gene ID" value="AT5G01380"/>
</dbReference>
<dbReference type="KEGG" id="ath:AT5G01380"/>
<dbReference type="Araport" id="AT5G01380"/>
<dbReference type="TAIR" id="AT5G01380"/>
<dbReference type="eggNOG" id="KOG4282">
    <property type="taxonomic scope" value="Eukaryota"/>
</dbReference>
<dbReference type="HOGENOM" id="CLU_063336_1_0_1"/>
<dbReference type="InParanoid" id="Q9SDW0"/>
<dbReference type="OMA" id="WSEATEP"/>
<dbReference type="OrthoDB" id="691673at2759"/>
<dbReference type="PhylomeDB" id="Q9SDW0"/>
<dbReference type="CD-CODE" id="4299E36E">
    <property type="entry name" value="Nucleolus"/>
</dbReference>
<dbReference type="PRO" id="PR:Q9SDW0"/>
<dbReference type="Proteomes" id="UP000006548">
    <property type="component" value="Chromosome 5"/>
</dbReference>
<dbReference type="ExpressionAtlas" id="Q9SDW0">
    <property type="expression patterns" value="baseline and differential"/>
</dbReference>
<dbReference type="GO" id="GO:0005634">
    <property type="term" value="C:nucleus"/>
    <property type="evidence" value="ECO:0000314"/>
    <property type="project" value="UniProtKB"/>
</dbReference>
<dbReference type="GO" id="GO:0003700">
    <property type="term" value="F:DNA-binding transcription factor activity"/>
    <property type="evidence" value="ECO:0000250"/>
    <property type="project" value="TAIR"/>
</dbReference>
<dbReference type="GO" id="GO:0042802">
    <property type="term" value="F:identical protein binding"/>
    <property type="evidence" value="ECO:0000353"/>
    <property type="project" value="UniProtKB"/>
</dbReference>
<dbReference type="GO" id="GO:0043565">
    <property type="term" value="F:sequence-specific DNA binding"/>
    <property type="evidence" value="ECO:0000314"/>
    <property type="project" value="UniProtKB"/>
</dbReference>
<dbReference type="GO" id="GO:0000976">
    <property type="term" value="F:transcription cis-regulatory region binding"/>
    <property type="evidence" value="ECO:0000353"/>
    <property type="project" value="TAIR"/>
</dbReference>
<dbReference type="GO" id="GO:0006355">
    <property type="term" value="P:regulation of DNA-templated transcription"/>
    <property type="evidence" value="ECO:0000304"/>
    <property type="project" value="TAIR"/>
</dbReference>
<dbReference type="CDD" id="cd12203">
    <property type="entry name" value="GT1"/>
    <property type="match status" value="1"/>
</dbReference>
<dbReference type="FunFam" id="1.10.10.60:FF:000032">
    <property type="entry name" value="Zinc finger and SCAN domain-containing 20"/>
    <property type="match status" value="1"/>
</dbReference>
<dbReference type="Gene3D" id="1.10.10.60">
    <property type="entry name" value="Homeodomain-like"/>
    <property type="match status" value="1"/>
</dbReference>
<dbReference type="InterPro" id="IPR044822">
    <property type="entry name" value="Myb_DNA-bind_4"/>
</dbReference>
<dbReference type="InterPro" id="IPR001005">
    <property type="entry name" value="SANT/Myb"/>
</dbReference>
<dbReference type="PANTHER" id="PTHR21654">
    <property type="entry name" value="FI21293P1"/>
    <property type="match status" value="1"/>
</dbReference>
<dbReference type="PANTHER" id="PTHR21654:SF96">
    <property type="entry name" value="TRIHELIX TRANSCRIPTION FACTOR GT-3A"/>
    <property type="match status" value="1"/>
</dbReference>
<dbReference type="Pfam" id="PF13837">
    <property type="entry name" value="Myb_DNA-bind_4"/>
    <property type="match status" value="1"/>
</dbReference>
<dbReference type="SMART" id="SM00717">
    <property type="entry name" value="SANT"/>
    <property type="match status" value="1"/>
</dbReference>
<dbReference type="PROSITE" id="PS50090">
    <property type="entry name" value="MYB_LIKE"/>
    <property type="match status" value="1"/>
</dbReference>
<comment type="function">
    <text evidence="3">Probable transcription factor that binds specifically to the core DNA sequence 5'-GTTAC-3'.</text>
</comment>
<comment type="subunit">
    <text evidence="3">Homodimer. Heterodimer with GT-3B.</text>
</comment>
<comment type="interaction">
    <interactant intactId="EBI-9348720">
        <id>Q9SDW0</id>
    </interactant>
    <interactant intactId="EBI-979206">
        <id>Q9SFD5</id>
        <label>ADA2A</label>
    </interactant>
    <organismsDiffer>false</organismsDiffer>
    <experiments>4</experiments>
</comment>
<comment type="interaction">
    <interactant intactId="EBI-9348720">
        <id>Q9SDW0</id>
    </interactant>
    <interactant intactId="EBI-1238497">
        <id>Q7X9H6</id>
        <label>AGL79</label>
    </interactant>
    <organismsDiffer>false</organismsDiffer>
    <experiments>4</experiments>
</comment>
<comment type="interaction">
    <interactant intactId="EBI-9348720">
        <id>Q9SDW0</id>
    </interactant>
    <interactant intactId="EBI-4459694">
        <id>Q6X7J9</id>
        <label>WOX4</label>
    </interactant>
    <organismsDiffer>false</organismsDiffer>
    <experiments>3</experiments>
</comment>
<comment type="subcellular location">
    <subcellularLocation>
        <location evidence="3">Nucleus</location>
    </subcellularLocation>
</comment>
<comment type="tissue specificity">
    <text evidence="3">Predominantly expressed in roots and flower buds.</text>
</comment>
<evidence type="ECO:0000255" key="1">
    <source>
        <dbReference type="PROSITE-ProRule" id="PRU00133"/>
    </source>
</evidence>
<evidence type="ECO:0000256" key="2">
    <source>
        <dbReference type="SAM" id="MobiDB-lite"/>
    </source>
</evidence>
<evidence type="ECO:0000269" key="3">
    <source>
    </source>
</evidence>
<feature type="chain" id="PRO_0000401380" description="Trihelix transcription factor GT-3a">
    <location>
        <begin position="1"/>
        <end position="323"/>
    </location>
</feature>
<feature type="domain" description="Myb-like" evidence="1">
    <location>
        <begin position="52"/>
        <end position="108"/>
    </location>
</feature>
<feature type="region of interest" description="Disordered" evidence="2">
    <location>
        <begin position="1"/>
        <end position="51"/>
    </location>
</feature>
<feature type="region of interest" description="Disordered" evidence="2">
    <location>
        <begin position="147"/>
        <end position="176"/>
    </location>
</feature>
<feature type="region of interest" description="Disordered" evidence="2">
    <location>
        <begin position="190"/>
        <end position="220"/>
    </location>
</feature>
<feature type="region of interest" description="Disordered" evidence="2">
    <location>
        <begin position="269"/>
        <end position="297"/>
    </location>
</feature>
<feature type="compositionally biased region" description="Basic residues" evidence="2">
    <location>
        <begin position="1"/>
        <end position="20"/>
    </location>
</feature>
<feature type="compositionally biased region" description="Acidic residues" evidence="2">
    <location>
        <begin position="164"/>
        <end position="176"/>
    </location>
</feature>
<name>TGT3A_ARATH</name>